<feature type="chain" id="PRO_0000146148" description="Large ribosomal subunit protein eL30">
    <location>
        <begin position="1"/>
        <end position="109"/>
    </location>
</feature>
<gene>
    <name evidence="1" type="primary">rpl30e</name>
    <name type="synonym">rpl30</name>
    <name type="ordered locus">MK0683</name>
</gene>
<keyword id="KW-1185">Reference proteome</keyword>
<keyword id="KW-0687">Ribonucleoprotein</keyword>
<keyword id="KW-0689">Ribosomal protein</keyword>
<sequence>MQEIERQIRMAVETGDVVLGSNQTIKLLKLGKPKLVIVAANCPAEIREDIEYYAELADVPVFVYPGTSMDLGDVCGRPHVVASMAVLDDGESDLIATVRKAMEEGAAPS</sequence>
<organism>
    <name type="scientific">Methanopyrus kandleri (strain AV19 / DSM 6324 / JCM 9639 / NBRC 100938)</name>
    <dbReference type="NCBI Taxonomy" id="190192"/>
    <lineage>
        <taxon>Archaea</taxon>
        <taxon>Methanobacteriati</taxon>
        <taxon>Methanobacteriota</taxon>
        <taxon>Methanomada group</taxon>
        <taxon>Methanopyri</taxon>
        <taxon>Methanopyrales</taxon>
        <taxon>Methanopyraceae</taxon>
        <taxon>Methanopyrus</taxon>
    </lineage>
</organism>
<protein>
    <recommendedName>
        <fullName evidence="1">Large ribosomal subunit protein eL30</fullName>
    </recommendedName>
    <alternativeName>
        <fullName evidence="2">50S ribosomal protein L30e</fullName>
    </alternativeName>
</protein>
<dbReference type="EMBL" id="AE009439">
    <property type="protein sequence ID" value="AAM01898.1"/>
    <property type="molecule type" value="Genomic_DNA"/>
</dbReference>
<dbReference type="RefSeq" id="WP_011019053.1">
    <property type="nucleotide sequence ID" value="NC_003551.1"/>
</dbReference>
<dbReference type="SMR" id="Q8TXJ0"/>
<dbReference type="FunCoup" id="Q8TXJ0">
    <property type="interactions" value="150"/>
</dbReference>
<dbReference type="STRING" id="190192.MK0683"/>
<dbReference type="PaxDb" id="190192-MK0683"/>
<dbReference type="EnsemblBacteria" id="AAM01898">
    <property type="protein sequence ID" value="AAM01898"/>
    <property type="gene ID" value="MK0683"/>
</dbReference>
<dbReference type="GeneID" id="1476784"/>
<dbReference type="KEGG" id="mka:MK0683"/>
<dbReference type="HOGENOM" id="CLU_130502_1_0_2"/>
<dbReference type="InParanoid" id="Q8TXJ0"/>
<dbReference type="OrthoDB" id="10759at2157"/>
<dbReference type="Proteomes" id="UP000001826">
    <property type="component" value="Chromosome"/>
</dbReference>
<dbReference type="GO" id="GO:0022625">
    <property type="term" value="C:cytosolic large ribosomal subunit"/>
    <property type="evidence" value="ECO:0007669"/>
    <property type="project" value="InterPro"/>
</dbReference>
<dbReference type="GO" id="GO:0003723">
    <property type="term" value="F:RNA binding"/>
    <property type="evidence" value="ECO:0007669"/>
    <property type="project" value="InterPro"/>
</dbReference>
<dbReference type="GO" id="GO:0003735">
    <property type="term" value="F:structural constituent of ribosome"/>
    <property type="evidence" value="ECO:0007669"/>
    <property type="project" value="InterPro"/>
</dbReference>
<dbReference type="GO" id="GO:0006412">
    <property type="term" value="P:translation"/>
    <property type="evidence" value="ECO:0007669"/>
    <property type="project" value="UniProtKB-UniRule"/>
</dbReference>
<dbReference type="Gene3D" id="3.30.1330.30">
    <property type="match status" value="1"/>
</dbReference>
<dbReference type="HAMAP" id="MF_00481">
    <property type="entry name" value="Ribosomal_eL30"/>
    <property type="match status" value="1"/>
</dbReference>
<dbReference type="InterPro" id="IPR000231">
    <property type="entry name" value="Ribosomal_eL30"/>
</dbReference>
<dbReference type="InterPro" id="IPR039109">
    <property type="entry name" value="Ribosomal_eL30-like"/>
</dbReference>
<dbReference type="InterPro" id="IPR029064">
    <property type="entry name" value="Ribosomal_eL30-like_sf"/>
</dbReference>
<dbReference type="InterPro" id="IPR022991">
    <property type="entry name" value="Ribosomal_eL30_CS"/>
</dbReference>
<dbReference type="InterPro" id="IPR004038">
    <property type="entry name" value="Ribosomal_eL8/eL30/eS12/Gad45"/>
</dbReference>
<dbReference type="NCBIfam" id="NF002172">
    <property type="entry name" value="PRK01018.1"/>
    <property type="match status" value="1"/>
</dbReference>
<dbReference type="PANTHER" id="PTHR11449">
    <property type="entry name" value="RIBOSOMAL PROTEIN L30"/>
    <property type="match status" value="1"/>
</dbReference>
<dbReference type="Pfam" id="PF01248">
    <property type="entry name" value="Ribosomal_L7Ae"/>
    <property type="match status" value="1"/>
</dbReference>
<dbReference type="SUPFAM" id="SSF55315">
    <property type="entry name" value="L30e-like"/>
    <property type="match status" value="1"/>
</dbReference>
<dbReference type="PROSITE" id="PS00709">
    <property type="entry name" value="RIBOSOMAL_L30E_1"/>
    <property type="match status" value="1"/>
</dbReference>
<dbReference type="PROSITE" id="PS00993">
    <property type="entry name" value="RIBOSOMAL_L30E_2"/>
    <property type="match status" value="1"/>
</dbReference>
<evidence type="ECO:0000255" key="1">
    <source>
        <dbReference type="HAMAP-Rule" id="MF_00481"/>
    </source>
</evidence>
<evidence type="ECO:0000305" key="2"/>
<accession>Q8TXJ0</accession>
<reference key="1">
    <citation type="journal article" date="2002" name="Proc. Natl. Acad. Sci. U.S.A.">
        <title>The complete genome of hyperthermophile Methanopyrus kandleri AV19 and monophyly of archaeal methanogens.</title>
        <authorList>
            <person name="Slesarev A.I."/>
            <person name="Mezhevaya K.V."/>
            <person name="Makarova K.S."/>
            <person name="Polushin N.N."/>
            <person name="Shcherbinina O.V."/>
            <person name="Shakhova V.V."/>
            <person name="Belova G.I."/>
            <person name="Aravind L."/>
            <person name="Natale D.A."/>
            <person name="Rogozin I.B."/>
            <person name="Tatusov R.L."/>
            <person name="Wolf Y.I."/>
            <person name="Stetter K.O."/>
            <person name="Malykh A.G."/>
            <person name="Koonin E.V."/>
            <person name="Kozyavkin S.A."/>
        </authorList>
    </citation>
    <scope>NUCLEOTIDE SEQUENCE [LARGE SCALE GENOMIC DNA]</scope>
    <source>
        <strain>AV19 / DSM 6324 / JCM 9639 / NBRC 100938</strain>
    </source>
</reference>
<comment type="similarity">
    <text evidence="1">Belongs to the eukaryotic ribosomal protein eL30 family.</text>
</comment>
<proteinExistence type="inferred from homology"/>
<name>RL30E_METKA</name>